<keyword id="KW-0067">ATP-binding</keyword>
<keyword id="KW-0169">Cobalamin biosynthesis</keyword>
<keyword id="KW-0315">Glutamine amidotransferase</keyword>
<keyword id="KW-0436">Ligase</keyword>
<keyword id="KW-0460">Magnesium</keyword>
<keyword id="KW-0484">Methanogenesis</keyword>
<keyword id="KW-0547">Nucleotide-binding</keyword>
<dbReference type="EC" id="6.3.5.11" evidence="1"/>
<dbReference type="EC" id="6.3.5.12" evidence="1 2"/>
<dbReference type="EMBL" id="CP000099">
    <property type="protein sequence ID" value="AAZ69332.1"/>
    <property type="molecule type" value="Genomic_DNA"/>
</dbReference>
<dbReference type="SMR" id="Q46FL0"/>
<dbReference type="STRING" id="269797.Mbar_A0348"/>
<dbReference type="PaxDb" id="269797-Mbar_A0348"/>
<dbReference type="KEGG" id="mba:Mbar_A0348"/>
<dbReference type="eggNOG" id="arCOG00106">
    <property type="taxonomic scope" value="Archaea"/>
</dbReference>
<dbReference type="HOGENOM" id="CLU_022752_2_0_2"/>
<dbReference type="OrthoDB" id="8896at2157"/>
<dbReference type="SABIO-RK" id="Q46FL0"/>
<dbReference type="UniPathway" id="UPA00148">
    <property type="reaction ID" value="UER00231"/>
</dbReference>
<dbReference type="GO" id="GO:0005524">
    <property type="term" value="F:ATP binding"/>
    <property type="evidence" value="ECO:0007669"/>
    <property type="project" value="UniProtKB-UniRule"/>
</dbReference>
<dbReference type="GO" id="GO:0042242">
    <property type="term" value="F:cobyrinic acid a,c-diamide synthase activity"/>
    <property type="evidence" value="ECO:0007669"/>
    <property type="project" value="UniProtKB-UniRule"/>
</dbReference>
<dbReference type="GO" id="GO:0009236">
    <property type="term" value="P:cobalamin biosynthetic process"/>
    <property type="evidence" value="ECO:0007669"/>
    <property type="project" value="UniProtKB-UniRule"/>
</dbReference>
<dbReference type="GO" id="GO:0015948">
    <property type="term" value="P:methanogenesis"/>
    <property type="evidence" value="ECO:0007669"/>
    <property type="project" value="UniProtKB-KW"/>
</dbReference>
<dbReference type="CDD" id="cd05388">
    <property type="entry name" value="CobB_N"/>
    <property type="match status" value="1"/>
</dbReference>
<dbReference type="CDD" id="cd03130">
    <property type="entry name" value="GATase1_CobB"/>
    <property type="match status" value="1"/>
</dbReference>
<dbReference type="Gene3D" id="3.40.50.880">
    <property type="match status" value="1"/>
</dbReference>
<dbReference type="Gene3D" id="3.40.50.300">
    <property type="entry name" value="P-loop containing nucleotide triphosphate hydrolases"/>
    <property type="match status" value="1"/>
</dbReference>
<dbReference type="HAMAP" id="MF_00027">
    <property type="entry name" value="CobB_CbiA"/>
    <property type="match status" value="1"/>
</dbReference>
<dbReference type="InterPro" id="IPR004484">
    <property type="entry name" value="CbiA/CobB_synth"/>
</dbReference>
<dbReference type="InterPro" id="IPR029062">
    <property type="entry name" value="Class_I_gatase-like"/>
</dbReference>
<dbReference type="InterPro" id="IPR002586">
    <property type="entry name" value="CobQ/CobB/MinD/ParA_Nub-bd_dom"/>
</dbReference>
<dbReference type="InterPro" id="IPR011698">
    <property type="entry name" value="GATase_3"/>
</dbReference>
<dbReference type="InterPro" id="IPR027417">
    <property type="entry name" value="P-loop_NTPase"/>
</dbReference>
<dbReference type="NCBIfam" id="TIGR00379">
    <property type="entry name" value="cobB"/>
    <property type="match status" value="1"/>
</dbReference>
<dbReference type="NCBIfam" id="NF033195">
    <property type="entry name" value="F430_CfbB"/>
    <property type="match status" value="1"/>
</dbReference>
<dbReference type="NCBIfam" id="NF002204">
    <property type="entry name" value="PRK01077.1"/>
    <property type="match status" value="1"/>
</dbReference>
<dbReference type="PANTHER" id="PTHR43873">
    <property type="entry name" value="COBYRINATE A,C-DIAMIDE SYNTHASE"/>
    <property type="match status" value="1"/>
</dbReference>
<dbReference type="PANTHER" id="PTHR43873:SF1">
    <property type="entry name" value="COBYRINATE A,C-DIAMIDE SYNTHASE"/>
    <property type="match status" value="1"/>
</dbReference>
<dbReference type="Pfam" id="PF01656">
    <property type="entry name" value="CbiA"/>
    <property type="match status" value="1"/>
</dbReference>
<dbReference type="Pfam" id="PF07685">
    <property type="entry name" value="GATase_3"/>
    <property type="match status" value="1"/>
</dbReference>
<dbReference type="SUPFAM" id="SSF52317">
    <property type="entry name" value="Class I glutamine amidotransferase-like"/>
    <property type="match status" value="1"/>
</dbReference>
<dbReference type="SUPFAM" id="SSF52540">
    <property type="entry name" value="P-loop containing nucleoside triphosphate hydrolases"/>
    <property type="match status" value="1"/>
</dbReference>
<dbReference type="PROSITE" id="PS51274">
    <property type="entry name" value="GATASE_COBBQ"/>
    <property type="match status" value="1"/>
</dbReference>
<accession>Q46FL0</accession>
<proteinExistence type="evidence at protein level"/>
<evidence type="ECO:0000255" key="1">
    <source>
        <dbReference type="HAMAP-Rule" id="MF_00027"/>
    </source>
</evidence>
<evidence type="ECO:0000269" key="2">
    <source>
    </source>
</evidence>
<evidence type="ECO:0000303" key="3">
    <source>
    </source>
</evidence>
<evidence type="ECO:0000305" key="4">
    <source>
    </source>
</evidence>
<evidence type="ECO:0000312" key="5">
    <source>
        <dbReference type="EMBL" id="AAZ69332.1"/>
    </source>
</evidence>
<feature type="chain" id="PRO_0000442459" description="Cobyrinate a,c-diamide synthase">
    <location>
        <begin position="1"/>
        <end position="494"/>
    </location>
</feature>
<feature type="domain" description="GATase cobBQ-type" evidence="1">
    <location>
        <begin position="270"/>
        <end position="475"/>
    </location>
</feature>
<feature type="active site" description="Nucleophile" evidence="1">
    <location>
        <position position="352"/>
    </location>
</feature>
<feature type="site" description="Increases nucleophilicity of active site Cys" evidence="1">
    <location>
        <position position="467"/>
    </location>
</feature>
<sequence length="494" mass="53786">MLNDKQSVENIPRILISADRSSSGKTTISMGLMAALVSRGYKVQPFKVALDYIDPSYHTEITGRFCRNLDGYLMDENGILDVYTHACEAGEKADIAIIEGVRGLYEGFESLSDLGSTAQIAKILNCPVIFVINARSITRSSAALINGYRNFDPDVEIAGVILNNIGSRRHAKKAKEAIEYYTGVPVIGIVPRDPAMQISMRHLGLMPALEGRRRLGDGGFEARLRGIEEIINKGIDVDRFMEIAKSAKALKSPENSVFSSVSDPGAPRPKIGVALDEAFNFYYRDNIDLLNLAGAEIVYFSPVKDASLPEVDGLYIGGGYPELFAAELEANESMRQDIKKASAAGMPIYAECGGLMYLTEKISTGVPGKGTYHDASMPESTYSMVGALPGHTIMGQTRVVSYNIGTLNKDCLLGKKYNSFKGHEFHHSEIREIPEDAEFAITLSRGTGIKNGMDGLISGNTLGSYAHLHGVAYREFASSLVEAARNFRDSRVLP</sequence>
<reference key="1">
    <citation type="journal article" date="2006" name="J. Bacteriol.">
        <title>The Methanosarcina barkeri genome: comparative analysis with Methanosarcina acetivorans and Methanosarcina mazei reveals extensive rearrangement within methanosarcinal genomes.</title>
        <authorList>
            <person name="Maeder D.L."/>
            <person name="Anderson I."/>
            <person name="Brettin T.S."/>
            <person name="Bruce D.C."/>
            <person name="Gilna P."/>
            <person name="Han C.S."/>
            <person name="Lapidus A."/>
            <person name="Metcalf W.W."/>
            <person name="Saunders E."/>
            <person name="Tapia R."/>
            <person name="Sowers K.R."/>
        </authorList>
    </citation>
    <scope>NUCLEOTIDE SEQUENCE [LARGE SCALE GENOMIC DNA]</scope>
    <source>
        <strain>Fusaro / DSM 804</strain>
    </source>
</reference>
<reference key="2">
    <citation type="journal article" date="2017" name="Nature">
        <title>Elucidation of the biosynthesis of the methane catalyst coenzyme F430.</title>
        <authorList>
            <person name="Moore S.J."/>
            <person name="Sowa S.T."/>
            <person name="Schuchardt C."/>
            <person name="Deery E."/>
            <person name="Lawrence A.D."/>
            <person name="Ramos J.V."/>
            <person name="Billig S."/>
            <person name="Birkemeyer C."/>
            <person name="Chivers P.T."/>
            <person name="Howard M.J."/>
            <person name="Rigby S.E."/>
            <person name="Layer G."/>
            <person name="Warren M.J."/>
        </authorList>
    </citation>
    <scope>FUNCTION</scope>
    <scope>CATALYTIC ACTIVITY</scope>
    <scope>BIOPHYSICOCHEMICAL PROPERTIES</scope>
    <scope>COFACTOR</scope>
    <scope>SUBSTRATE SPECIFICITY</scope>
    <source>
        <strain>Fusaro / DSM 804</strain>
    </source>
</reference>
<name>CBIA_METBF</name>
<comment type="function">
    <text evidence="1 2">Catalyzes the ATP-dependent amidation of the two carboxylate groups at positions a and c of cobyrinate, using either L-glutamine or ammonia as the nitrogen source (Potential). Involved in the biosynthesis of the unique nickel-containing tetrapyrrole coenzyme F430, the prosthetic group of methyl-coenzyme M reductase (MCR), which plays a key role in methanogenesis and anaerobic methane oxidation (PubMed:28225763). Catalyzes the ATP-dependent amidation of the two carboxylate groups at positions a and c of Ni-sirohydrochlorin, using L-glutamine or ammonia as the nitrogen source (PubMed:28225763). Also able to use sirohydrochlorin as substrate, but only produces a monoamide species in a much slower reaction (PubMed:28225763). Unable to use other metallosirohydrochlorins such as sirohaem and Co-sirohydrochlorin (PubMed:28225763).</text>
</comment>
<comment type="catalytic activity">
    <reaction evidence="1">
        <text>cob(II)yrinate + 2 L-glutamine + 2 ATP + 2 H2O = cob(II)yrinate a,c diamide + 2 L-glutamate + 2 ADP + 2 phosphate + 2 H(+)</text>
        <dbReference type="Rhea" id="RHEA:26289"/>
        <dbReference type="ChEBI" id="CHEBI:15377"/>
        <dbReference type="ChEBI" id="CHEBI:15378"/>
        <dbReference type="ChEBI" id="CHEBI:29985"/>
        <dbReference type="ChEBI" id="CHEBI:30616"/>
        <dbReference type="ChEBI" id="CHEBI:43474"/>
        <dbReference type="ChEBI" id="CHEBI:58359"/>
        <dbReference type="ChEBI" id="CHEBI:58537"/>
        <dbReference type="ChEBI" id="CHEBI:58894"/>
        <dbReference type="ChEBI" id="CHEBI:456216"/>
        <dbReference type="EC" id="6.3.5.11"/>
    </reaction>
</comment>
<comment type="catalytic activity">
    <reaction evidence="1 2">
        <text>Ni-sirohydrochlorin + 2 L-glutamine + 2 ATP + 2 H2O = Ni-sirohydrochlorin a,c-diamide + 2 L-glutamate + 2 ADP + 2 phosphate + 2 H(+)</text>
        <dbReference type="Rhea" id="RHEA:52896"/>
        <dbReference type="ChEBI" id="CHEBI:15377"/>
        <dbReference type="ChEBI" id="CHEBI:15378"/>
        <dbReference type="ChEBI" id="CHEBI:29985"/>
        <dbReference type="ChEBI" id="CHEBI:30616"/>
        <dbReference type="ChEBI" id="CHEBI:43474"/>
        <dbReference type="ChEBI" id="CHEBI:58359"/>
        <dbReference type="ChEBI" id="CHEBI:136841"/>
        <dbReference type="ChEBI" id="CHEBI:136887"/>
        <dbReference type="ChEBI" id="CHEBI:456216"/>
        <dbReference type="EC" id="6.3.5.12"/>
    </reaction>
</comment>
<comment type="cofactor">
    <cofactor evidence="1 4">
        <name>Mg(2+)</name>
        <dbReference type="ChEBI" id="CHEBI:18420"/>
    </cofactor>
</comment>
<comment type="biophysicochemical properties">
    <kinetics>
        <KM evidence="2">46 uM for L-glutamine</KM>
        <KM evidence="2">28 uM for ATP</KM>
        <text evidence="2">kcat is 1.03 min(-1) for ATP as substrate. kcat is 0.78 min(-1) for L-glutamine as substrate.</text>
    </kinetics>
</comment>
<comment type="pathway">
    <text evidence="1">Cofactor biosynthesis; adenosylcobalamin biosynthesis; cob(II)yrinate a,c-diamide from sirohydrochlorin (anaerobic route): step 10/10.</text>
</comment>
<comment type="domain">
    <text evidence="1">Comprises of two domains. The C-terminal domain contains the binding site for glutamine and catalyzes the hydrolysis of this substrate to glutamate and ammonia. The N-terminal domain is anticipated to bind ATP, and cobyrinate or Ni-sirohydrochlorin, and catalyzes the ultimate synthesis of the diamide product. The ammonia produced via the glutaminase domain is probably translocated to the adjacent domain via a molecular tunnel, where it reacts with an activated intermediate.</text>
</comment>
<comment type="miscellaneous">
    <text evidence="1">The a and c carboxylates of cobyrinate and Ni-sirohydrochlorin are activated for nucleophilic attack via formation of a phosphorylated intermediate by ATP. CbiA catalyzes first the amidation of the c-carboxylate, and then that of the a-carboxylate.</text>
</comment>
<comment type="similarity">
    <text evidence="1">Belongs to the CobB/CbiA family.</text>
</comment>
<gene>
    <name evidence="1" type="primary">cbiA</name>
    <name evidence="1 3" type="synonym">cfbB</name>
    <name evidence="5" type="ordered locus">Mbar_A0348</name>
</gene>
<protein>
    <recommendedName>
        <fullName evidence="1">Cobyrinate a,c-diamide synthase</fullName>
        <ecNumber evidence="1">6.3.5.11</ecNumber>
    </recommendedName>
    <alternativeName>
        <fullName evidence="1">Cobyrinic acid a,c-diamide synthetase</fullName>
    </alternativeName>
    <alternativeName>
        <fullName evidence="1 3">Ni-sirohydrochlorin a,c-diamide synthase</fullName>
        <ecNumber evidence="1 2">6.3.5.12</ecNumber>
    </alternativeName>
    <alternativeName>
        <fullName evidence="1 3">Ni-sirohydrochlorin a,c-diamide synthetase</fullName>
    </alternativeName>
</protein>
<organism>
    <name type="scientific">Methanosarcina barkeri (strain Fusaro / DSM 804)</name>
    <dbReference type="NCBI Taxonomy" id="269797"/>
    <lineage>
        <taxon>Archaea</taxon>
        <taxon>Methanobacteriati</taxon>
        <taxon>Methanobacteriota</taxon>
        <taxon>Stenosarchaea group</taxon>
        <taxon>Methanomicrobia</taxon>
        <taxon>Methanosarcinales</taxon>
        <taxon>Methanosarcinaceae</taxon>
        <taxon>Methanosarcina</taxon>
    </lineage>
</organism>